<accession>Q9LSL6</accession>
<feature type="chain" id="PRO_0000074297" description="Dof zinc finger protein DOF5.7">
    <location>
        <begin position="1"/>
        <end position="316"/>
    </location>
</feature>
<feature type="zinc finger region" description="Dof-type" evidence="2">
    <location>
        <begin position="41"/>
        <end position="95"/>
    </location>
</feature>
<feature type="region of interest" description="Disordered" evidence="3">
    <location>
        <begin position="1"/>
        <end position="42"/>
    </location>
</feature>
<feature type="region of interest" description="Disordered" evidence="3">
    <location>
        <begin position="92"/>
        <end position="111"/>
    </location>
</feature>
<feature type="region of interest" description="Disordered" evidence="3">
    <location>
        <begin position="257"/>
        <end position="294"/>
    </location>
</feature>
<feature type="compositionally biased region" description="Polar residues" evidence="3">
    <location>
        <begin position="21"/>
        <end position="42"/>
    </location>
</feature>
<feature type="compositionally biased region" description="Low complexity" evidence="3">
    <location>
        <begin position="101"/>
        <end position="111"/>
    </location>
</feature>
<feature type="compositionally biased region" description="Polar residues" evidence="3">
    <location>
        <begin position="257"/>
        <end position="291"/>
    </location>
</feature>
<feature type="binding site" evidence="2">
    <location>
        <position position="43"/>
    </location>
    <ligand>
        <name>Zn(2+)</name>
        <dbReference type="ChEBI" id="CHEBI:29105"/>
    </ligand>
</feature>
<feature type="binding site" evidence="2">
    <location>
        <position position="46"/>
    </location>
    <ligand>
        <name>Zn(2+)</name>
        <dbReference type="ChEBI" id="CHEBI:29105"/>
    </ligand>
</feature>
<feature type="binding site" evidence="2">
    <location>
        <position position="68"/>
    </location>
    <ligand>
        <name>Zn(2+)</name>
        <dbReference type="ChEBI" id="CHEBI:29105"/>
    </ligand>
</feature>
<feature type="binding site" evidence="2">
    <location>
        <position position="71"/>
    </location>
    <ligand>
        <name>Zn(2+)</name>
        <dbReference type="ChEBI" id="CHEBI:29105"/>
    </ligand>
</feature>
<evidence type="ECO:0000250" key="1"/>
<evidence type="ECO:0000255" key="2">
    <source>
        <dbReference type="PROSITE-ProRule" id="PRU00071"/>
    </source>
</evidence>
<evidence type="ECO:0000256" key="3">
    <source>
        <dbReference type="SAM" id="MobiDB-lite"/>
    </source>
</evidence>
<evidence type="ECO:0000305" key="4"/>
<organism>
    <name type="scientific">Arabidopsis thaliana</name>
    <name type="common">Mouse-ear cress</name>
    <dbReference type="NCBI Taxonomy" id="3702"/>
    <lineage>
        <taxon>Eukaryota</taxon>
        <taxon>Viridiplantae</taxon>
        <taxon>Streptophyta</taxon>
        <taxon>Embryophyta</taxon>
        <taxon>Tracheophyta</taxon>
        <taxon>Spermatophyta</taxon>
        <taxon>Magnoliopsida</taxon>
        <taxon>eudicotyledons</taxon>
        <taxon>Gunneridae</taxon>
        <taxon>Pentapetalae</taxon>
        <taxon>rosids</taxon>
        <taxon>malvids</taxon>
        <taxon>Brassicales</taxon>
        <taxon>Brassicaceae</taxon>
        <taxon>Camelineae</taxon>
        <taxon>Arabidopsis</taxon>
    </lineage>
</organism>
<gene>
    <name type="primary">DOF5.7</name>
    <name type="ordered locus">At5g65590</name>
    <name type="ORF">K21L13.10</name>
</gene>
<dbReference type="EMBL" id="AB026639">
    <property type="protein sequence ID" value="BAA98178.1"/>
    <property type="molecule type" value="Genomic_DNA"/>
</dbReference>
<dbReference type="EMBL" id="CP002688">
    <property type="protein sequence ID" value="AED98074.1"/>
    <property type="molecule type" value="Genomic_DNA"/>
</dbReference>
<dbReference type="EMBL" id="BT014981">
    <property type="protein sequence ID" value="AAT70432.1"/>
    <property type="molecule type" value="mRNA"/>
</dbReference>
<dbReference type="EMBL" id="BT015717">
    <property type="protein sequence ID" value="AAU45215.1"/>
    <property type="molecule type" value="mRNA"/>
</dbReference>
<dbReference type="RefSeq" id="NP_201362.1">
    <property type="nucleotide sequence ID" value="NM_125957.3"/>
</dbReference>
<dbReference type="BioGRID" id="21927">
    <property type="interactions" value="3"/>
</dbReference>
<dbReference type="FunCoup" id="Q9LSL6">
    <property type="interactions" value="217"/>
</dbReference>
<dbReference type="STRING" id="3702.Q9LSL6"/>
<dbReference type="iPTMnet" id="Q9LSL6"/>
<dbReference type="PaxDb" id="3702-AT5G65590.1"/>
<dbReference type="ProteomicsDB" id="222128"/>
<dbReference type="EnsemblPlants" id="AT5G65590.1">
    <property type="protein sequence ID" value="AT5G65590.1"/>
    <property type="gene ID" value="AT5G65590"/>
</dbReference>
<dbReference type="GeneID" id="836685"/>
<dbReference type="Gramene" id="AT5G65590.1">
    <property type="protein sequence ID" value="AT5G65590.1"/>
    <property type="gene ID" value="AT5G65590"/>
</dbReference>
<dbReference type="KEGG" id="ath:AT5G65590"/>
<dbReference type="Araport" id="AT5G65590"/>
<dbReference type="TAIR" id="AT5G65590">
    <property type="gene designation" value="SCAP1"/>
</dbReference>
<dbReference type="eggNOG" id="ENOG502R06Q">
    <property type="taxonomic scope" value="Eukaryota"/>
</dbReference>
<dbReference type="HOGENOM" id="CLU_065892_0_0_1"/>
<dbReference type="InParanoid" id="Q9LSL6"/>
<dbReference type="OMA" id="GAIQDMG"/>
<dbReference type="OrthoDB" id="1927254at2759"/>
<dbReference type="PhylomeDB" id="Q9LSL6"/>
<dbReference type="PRO" id="PR:Q9LSL6"/>
<dbReference type="Proteomes" id="UP000006548">
    <property type="component" value="Chromosome 5"/>
</dbReference>
<dbReference type="ExpressionAtlas" id="Q9LSL6">
    <property type="expression patterns" value="baseline and differential"/>
</dbReference>
<dbReference type="GO" id="GO:0005634">
    <property type="term" value="C:nucleus"/>
    <property type="evidence" value="ECO:0000314"/>
    <property type="project" value="TAIR"/>
</dbReference>
<dbReference type="GO" id="GO:0003700">
    <property type="term" value="F:DNA-binding transcription factor activity"/>
    <property type="evidence" value="ECO:0000250"/>
    <property type="project" value="TAIR"/>
</dbReference>
<dbReference type="GO" id="GO:0043565">
    <property type="term" value="F:sequence-specific DNA binding"/>
    <property type="evidence" value="ECO:0000314"/>
    <property type="project" value="TAIR"/>
</dbReference>
<dbReference type="GO" id="GO:0008270">
    <property type="term" value="F:zinc ion binding"/>
    <property type="evidence" value="ECO:0007669"/>
    <property type="project" value="UniProtKB-KW"/>
</dbReference>
<dbReference type="GO" id="GO:0010052">
    <property type="term" value="P:guard cell differentiation"/>
    <property type="evidence" value="ECO:0000315"/>
    <property type="project" value="TAIR"/>
</dbReference>
<dbReference type="GO" id="GO:0045893">
    <property type="term" value="P:positive regulation of DNA-templated transcription"/>
    <property type="evidence" value="ECO:0000314"/>
    <property type="project" value="TAIR"/>
</dbReference>
<dbReference type="GO" id="GO:1902066">
    <property type="term" value="P:regulation of cell wall pectin metabolic process"/>
    <property type="evidence" value="ECO:0000315"/>
    <property type="project" value="TAIR"/>
</dbReference>
<dbReference type="GO" id="GO:0006355">
    <property type="term" value="P:regulation of DNA-templated transcription"/>
    <property type="evidence" value="ECO:0000304"/>
    <property type="project" value="TAIR"/>
</dbReference>
<dbReference type="GO" id="GO:0010118">
    <property type="term" value="P:stomatal movement"/>
    <property type="evidence" value="ECO:0000315"/>
    <property type="project" value="TAIR"/>
</dbReference>
<dbReference type="InterPro" id="IPR045174">
    <property type="entry name" value="Dof"/>
</dbReference>
<dbReference type="InterPro" id="IPR003851">
    <property type="entry name" value="Znf_Dof"/>
</dbReference>
<dbReference type="PANTHER" id="PTHR31992">
    <property type="entry name" value="DOF ZINC FINGER PROTEIN DOF1.4-RELATED"/>
    <property type="match status" value="1"/>
</dbReference>
<dbReference type="PANTHER" id="PTHR31992:SF313">
    <property type="entry name" value="DOF ZINC FINGER PROTEIN DOF5.7"/>
    <property type="match status" value="1"/>
</dbReference>
<dbReference type="Pfam" id="PF02701">
    <property type="entry name" value="Zn_ribbon_Dof"/>
    <property type="match status" value="1"/>
</dbReference>
<dbReference type="PROSITE" id="PS01361">
    <property type="entry name" value="ZF_DOF_1"/>
    <property type="match status" value="1"/>
</dbReference>
<dbReference type="PROSITE" id="PS50884">
    <property type="entry name" value="ZF_DOF_2"/>
    <property type="match status" value="1"/>
</dbReference>
<name>DOF57_ARATH</name>
<sequence>MSSHTNLPSPKPVPKPDHRISGTSQTKKPPSSSVAQDQQNLKCPRCNSPNTKFCYYNNYSLSQPRHFCKSCRRYWTRGGALRNVPIGGGCRKTKKSIKPNSSMNTLPSSSSSQRFFSSIMEDSSKFFPPPTTMDFQLAGLSLNKMNDLQLLNNQEVLDLRPMMSSGRENTPVDVGSGLSLMGFGDFNNNHSPTGFTTAGASDGNLASSIETLSCLNQDLHWRLQQQRMAMLFGNSKEETVVVERPQPILYRNLEIVNSSSPSSPTKKGDNQTEWYFGNNSDNEGVISNNANTGGGGSEWNNGIQAWTDLNHYNALP</sequence>
<comment type="function">
    <text evidence="1">Transcription factor that binds specifically to a 5'-AA[AG]G-3' consensus core sequence.</text>
</comment>
<comment type="subcellular location">
    <subcellularLocation>
        <location evidence="4">Nucleus</location>
    </subcellularLocation>
</comment>
<reference key="1">
    <citation type="submission" date="1999-04" db="EMBL/GenBank/DDBJ databases">
        <title>Structural analysis of Arabidopsis thaliana chromosome 5. XI.</title>
        <authorList>
            <person name="Kaneko T."/>
            <person name="Katoh T."/>
            <person name="Asamizu E."/>
            <person name="Sato S."/>
            <person name="Nakamura Y."/>
            <person name="Kotani H."/>
            <person name="Tabata S."/>
        </authorList>
    </citation>
    <scope>NUCLEOTIDE SEQUENCE [LARGE SCALE GENOMIC DNA]</scope>
    <source>
        <strain>cv. Columbia</strain>
    </source>
</reference>
<reference key="2">
    <citation type="journal article" date="2017" name="Plant J.">
        <title>Araport11: a complete reannotation of the Arabidopsis thaliana reference genome.</title>
        <authorList>
            <person name="Cheng C.Y."/>
            <person name="Krishnakumar V."/>
            <person name="Chan A.P."/>
            <person name="Thibaud-Nissen F."/>
            <person name="Schobel S."/>
            <person name="Town C.D."/>
        </authorList>
    </citation>
    <scope>GENOME REANNOTATION</scope>
    <source>
        <strain>cv. Columbia</strain>
    </source>
</reference>
<reference key="3">
    <citation type="submission" date="2004-09" db="EMBL/GenBank/DDBJ databases">
        <title>Arabidopsis ORF clones.</title>
        <authorList>
            <person name="Kim C.J."/>
            <person name="Chen H."/>
            <person name="Cheuk R.F."/>
            <person name="Shinn P."/>
            <person name="Ecker J.R."/>
        </authorList>
    </citation>
    <scope>NUCLEOTIDE SEQUENCE [LARGE SCALE MRNA]</scope>
    <source>
        <strain>cv. Columbia</strain>
    </source>
</reference>
<reference key="4">
    <citation type="journal article" date="2002" name="Trends Plant Sci.">
        <title>The Dof family of plant transcription factors.</title>
        <authorList>
            <person name="Yanagisawa S."/>
        </authorList>
    </citation>
    <scope>GENE FAMILY</scope>
    <scope>NOMENCLATURE</scope>
</reference>
<proteinExistence type="evidence at transcript level"/>
<keyword id="KW-0238">DNA-binding</keyword>
<keyword id="KW-0479">Metal-binding</keyword>
<keyword id="KW-0539">Nucleus</keyword>
<keyword id="KW-1185">Reference proteome</keyword>
<keyword id="KW-0804">Transcription</keyword>
<keyword id="KW-0805">Transcription regulation</keyword>
<keyword id="KW-0862">Zinc</keyword>
<keyword id="KW-0863">Zinc-finger</keyword>
<protein>
    <recommendedName>
        <fullName>Dof zinc finger protein DOF5.7</fullName>
        <shortName>AtDOF5.7</shortName>
    </recommendedName>
</protein>